<feature type="chain" id="PRO_0000214495" description="Probable Fe(2+)-trafficking protein">
    <location>
        <begin position="1"/>
        <end position="90"/>
    </location>
</feature>
<comment type="function">
    <text evidence="1">Could be a mediator in iron transactions between iron acquisition and iron-requiring processes, such as synthesis and/or repair of Fe-S clusters in biosynthetic enzymes.</text>
</comment>
<comment type="similarity">
    <text evidence="1">Belongs to the Fe(2+)-trafficking protein family.</text>
</comment>
<evidence type="ECO:0000255" key="1">
    <source>
        <dbReference type="HAMAP-Rule" id="MF_00686"/>
    </source>
</evidence>
<sequence>MARTVFCEYLKQESEGLDFQLYPGELGKRIFDSISKQAWREWMKKQTMLVNEKKLNMMNADHRQLLEQEMVNFLFEGKDVHIEGYVPPTE</sequence>
<reference key="1">
    <citation type="journal article" date="2001" name="Proc. Natl. Acad. Sci. U.S.A.">
        <title>Complete genomic sequence of Pasteurella multocida Pm70.</title>
        <authorList>
            <person name="May B.J."/>
            <person name="Zhang Q."/>
            <person name="Li L.L."/>
            <person name="Paustian M.L."/>
            <person name="Whittam T.S."/>
            <person name="Kapur V."/>
        </authorList>
    </citation>
    <scope>NUCLEOTIDE SEQUENCE [LARGE SCALE GENOMIC DNA]</scope>
    <source>
        <strain>Pm70</strain>
    </source>
</reference>
<name>FETP_PASMU</name>
<protein>
    <recommendedName>
        <fullName evidence="1">Probable Fe(2+)-trafficking protein</fullName>
    </recommendedName>
</protein>
<dbReference type="EMBL" id="AE004439">
    <property type="protein sequence ID" value="AAK03404.1"/>
    <property type="molecule type" value="Genomic_DNA"/>
</dbReference>
<dbReference type="RefSeq" id="WP_010907124.1">
    <property type="nucleotide sequence ID" value="NC_002663.1"/>
</dbReference>
<dbReference type="SMR" id="Q9CLB9"/>
<dbReference type="STRING" id="272843.PM1320"/>
<dbReference type="EnsemblBacteria" id="AAK03404">
    <property type="protein sequence ID" value="AAK03404"/>
    <property type="gene ID" value="PM1320"/>
</dbReference>
<dbReference type="KEGG" id="pmu:PM1320"/>
<dbReference type="PATRIC" id="fig|272843.6.peg.1331"/>
<dbReference type="HOGENOM" id="CLU_170994_0_0_6"/>
<dbReference type="OrthoDB" id="9804318at2"/>
<dbReference type="Proteomes" id="UP000000809">
    <property type="component" value="Chromosome"/>
</dbReference>
<dbReference type="GO" id="GO:0005829">
    <property type="term" value="C:cytosol"/>
    <property type="evidence" value="ECO:0007669"/>
    <property type="project" value="TreeGrafter"/>
</dbReference>
<dbReference type="GO" id="GO:0005506">
    <property type="term" value="F:iron ion binding"/>
    <property type="evidence" value="ECO:0007669"/>
    <property type="project" value="UniProtKB-UniRule"/>
</dbReference>
<dbReference type="GO" id="GO:0034599">
    <property type="term" value="P:cellular response to oxidative stress"/>
    <property type="evidence" value="ECO:0007669"/>
    <property type="project" value="TreeGrafter"/>
</dbReference>
<dbReference type="FunFam" id="1.10.3880.10:FF:000001">
    <property type="entry name" value="Probable Fe(2+)-trafficking protein"/>
    <property type="match status" value="1"/>
</dbReference>
<dbReference type="Gene3D" id="1.10.3880.10">
    <property type="entry name" value="Fe(II) trafficking protein YggX"/>
    <property type="match status" value="1"/>
</dbReference>
<dbReference type="HAMAP" id="MF_00686">
    <property type="entry name" value="Fe_traffic_YggX"/>
    <property type="match status" value="1"/>
</dbReference>
<dbReference type="InterPro" id="IPR007457">
    <property type="entry name" value="Fe_traffick_prot_YggX"/>
</dbReference>
<dbReference type="InterPro" id="IPR036766">
    <property type="entry name" value="Fe_traffick_prot_YggX_sf"/>
</dbReference>
<dbReference type="NCBIfam" id="NF003817">
    <property type="entry name" value="PRK05408.1"/>
    <property type="match status" value="1"/>
</dbReference>
<dbReference type="PANTHER" id="PTHR36965">
    <property type="entry name" value="FE(2+)-TRAFFICKING PROTEIN-RELATED"/>
    <property type="match status" value="1"/>
</dbReference>
<dbReference type="PANTHER" id="PTHR36965:SF1">
    <property type="entry name" value="FE(2+)-TRAFFICKING PROTEIN-RELATED"/>
    <property type="match status" value="1"/>
</dbReference>
<dbReference type="Pfam" id="PF04362">
    <property type="entry name" value="Iron_traffic"/>
    <property type="match status" value="1"/>
</dbReference>
<dbReference type="PIRSF" id="PIRSF029827">
    <property type="entry name" value="Fe_traffic_YggX"/>
    <property type="match status" value="1"/>
</dbReference>
<dbReference type="SUPFAM" id="SSF111148">
    <property type="entry name" value="YggX-like"/>
    <property type="match status" value="1"/>
</dbReference>
<keyword id="KW-0408">Iron</keyword>
<keyword id="KW-1185">Reference proteome</keyword>
<organism>
    <name type="scientific">Pasteurella multocida (strain Pm70)</name>
    <dbReference type="NCBI Taxonomy" id="272843"/>
    <lineage>
        <taxon>Bacteria</taxon>
        <taxon>Pseudomonadati</taxon>
        <taxon>Pseudomonadota</taxon>
        <taxon>Gammaproteobacteria</taxon>
        <taxon>Pasteurellales</taxon>
        <taxon>Pasteurellaceae</taxon>
        <taxon>Pasteurella</taxon>
    </lineage>
</organism>
<proteinExistence type="inferred from homology"/>
<gene>
    <name type="ordered locus">PM1320</name>
</gene>
<accession>Q9CLB9</accession>